<accession>P0DRA2</accession>
<keyword id="KW-0027">Amidation</keyword>
<keyword id="KW-0044">Antibiotic</keyword>
<keyword id="KW-0929">Antimicrobial</keyword>
<keyword id="KW-0295">Fungicide</keyword>
<keyword id="KW-1213">G-protein coupled receptor impairing toxin</keyword>
<keyword id="KW-0391">Immunity</keyword>
<keyword id="KW-0399">Innate immunity</keyword>
<keyword id="KW-0467">Mast cell degranulation</keyword>
<keyword id="KW-0472">Membrane</keyword>
<keyword id="KW-0677">Repeat</keyword>
<keyword id="KW-0964">Secreted</keyword>
<keyword id="KW-0732">Signal</keyword>
<keyword id="KW-1052">Target cell membrane</keyword>
<keyword id="KW-1053">Target membrane</keyword>
<keyword id="KW-0800">Toxin</keyword>
<dbReference type="GO" id="GO:0005576">
    <property type="term" value="C:extracellular region"/>
    <property type="evidence" value="ECO:0007669"/>
    <property type="project" value="UniProtKB-SubCell"/>
</dbReference>
<dbReference type="GO" id="GO:0016020">
    <property type="term" value="C:membrane"/>
    <property type="evidence" value="ECO:0007669"/>
    <property type="project" value="UniProtKB-KW"/>
</dbReference>
<dbReference type="GO" id="GO:0044218">
    <property type="term" value="C:other organism cell membrane"/>
    <property type="evidence" value="ECO:0007669"/>
    <property type="project" value="UniProtKB-KW"/>
</dbReference>
<dbReference type="GO" id="GO:0090729">
    <property type="term" value="F:toxin activity"/>
    <property type="evidence" value="ECO:0007669"/>
    <property type="project" value="UniProtKB-KW"/>
</dbReference>
<dbReference type="GO" id="GO:0042742">
    <property type="term" value="P:defense response to bacterium"/>
    <property type="evidence" value="ECO:0007669"/>
    <property type="project" value="UniProtKB-KW"/>
</dbReference>
<dbReference type="GO" id="GO:0050832">
    <property type="term" value="P:defense response to fungus"/>
    <property type="evidence" value="ECO:0007669"/>
    <property type="project" value="UniProtKB-KW"/>
</dbReference>
<dbReference type="GO" id="GO:0045087">
    <property type="term" value="P:innate immune response"/>
    <property type="evidence" value="ECO:0007669"/>
    <property type="project" value="UniProtKB-KW"/>
</dbReference>
<dbReference type="GO" id="GO:0031640">
    <property type="term" value="P:killing of cells of another organism"/>
    <property type="evidence" value="ECO:0007669"/>
    <property type="project" value="UniProtKB-KW"/>
</dbReference>
<organism>
    <name type="scientific">Vespa bicolor</name>
    <name type="common">Black shield wasp</name>
    <dbReference type="NCBI Taxonomy" id="619325"/>
    <lineage>
        <taxon>Eukaryota</taxon>
        <taxon>Metazoa</taxon>
        <taxon>Ecdysozoa</taxon>
        <taxon>Arthropoda</taxon>
        <taxon>Hexapoda</taxon>
        <taxon>Insecta</taxon>
        <taxon>Pterygota</taxon>
        <taxon>Neoptera</taxon>
        <taxon>Endopterygota</taxon>
        <taxon>Hymenoptera</taxon>
        <taxon>Apocrita</taxon>
        <taxon>Aculeata</taxon>
        <taxon>Vespoidea</taxon>
        <taxon>Vespidae</taxon>
        <taxon>Vespinae</taxon>
        <taxon>Vespa</taxon>
    </lineage>
</organism>
<feature type="signal peptide" evidence="4">
    <location>
        <begin position="1"/>
        <end position="27"/>
    </location>
</feature>
<feature type="propeptide" id="PRO_0000458802" evidence="7">
    <location>
        <begin position="28"/>
        <end position="45"/>
    </location>
</feature>
<feature type="peptide" id="PRO_0000458803" description="Mastoparan-VB2" evidence="7">
    <location>
        <begin position="46"/>
        <end position="59"/>
    </location>
</feature>
<feature type="repeat" description="AXPX 1" evidence="7">
    <location>
        <begin position="27"/>
        <end position="30"/>
    </location>
</feature>
<feature type="repeat" description="AXPX 2" evidence="7">
    <location>
        <begin position="31"/>
        <end position="34"/>
    </location>
</feature>
<feature type="repeat" description="AXPX 3" evidence="7">
    <location>
        <begin position="35"/>
        <end position="38"/>
    </location>
</feature>
<feature type="repeat" description="AXPX 4" evidence="7">
    <location>
        <begin position="41"/>
        <end position="44"/>
    </location>
</feature>
<feature type="modified residue" description="Leucine amide" evidence="2">
    <location>
        <position position="59"/>
    </location>
</feature>
<name>MAST2_VESBI</name>
<reference key="1">
    <citation type="journal article" date="2008" name="Peptides">
        <title>Antimicrobial peptides from the venoms of Vespa bicolor Fabricius.</title>
        <authorList>
            <person name="Chen W."/>
            <person name="Yang X."/>
            <person name="Yang X."/>
            <person name="Zhai L."/>
            <person name="Lu Z."/>
            <person name="Liu J."/>
            <person name="Yu H."/>
        </authorList>
    </citation>
    <scope>NUCLEOTIDE SEQUENCE [MRNA]</scope>
    <source>
        <tissue>Venom gland</tissue>
    </source>
</reference>
<evidence type="ECO:0000250" key="1">
    <source>
        <dbReference type="UniProtKB" id="P01514"/>
    </source>
</evidence>
<evidence type="ECO:0000250" key="2">
    <source>
        <dbReference type="UniProtKB" id="P0DRA1"/>
    </source>
</evidence>
<evidence type="ECO:0000250" key="3">
    <source>
        <dbReference type="UniProtKB" id="P84914"/>
    </source>
</evidence>
<evidence type="ECO:0000255" key="4"/>
<evidence type="ECO:0000303" key="5">
    <source>
    </source>
</evidence>
<evidence type="ECO:0000305" key="6"/>
<evidence type="ECO:0000305" key="7">
    <source>
    </source>
</evidence>
<sequence>MKNTILLLFTAFIFLMGFFGMSADALADPKADPLAGPFPDADPDPINMKAVAAVAKKPLG</sequence>
<comment type="function">
    <text evidence="1 2 3">Antimicrobial peptide. Shows activity against both Gram-positive and -negative bacteria, as well against fungi. Also promotes moderate mast cell degranulation. Does not show hemolytic activity on rabbit and human erythrocytes (By similarity). Its mast cell degranulation activity may be related to the activation of G-protein coupled receptors in mast cells as well as interaction with other proteins located in cell endosomal membranes in the mast cells (By similarity).</text>
</comment>
<comment type="subcellular location">
    <subcellularLocation>
        <location evidence="7">Secreted</location>
    </subcellularLocation>
    <subcellularLocation>
        <location evidence="6">Target cell membrane</location>
    </subcellularLocation>
    <text evidence="7">Assumes an amphipathic alpha-helical conformation in a lipid environment.</text>
</comment>
<comment type="tissue specificity">
    <text evidence="7">Expressed by the venom gland.</text>
</comment>
<comment type="similarity">
    <text evidence="6">Belongs to the MCD family. Mastoparan subfamily.</text>
</comment>
<proteinExistence type="inferred from homology"/>
<protein>
    <recommendedName>
        <fullName evidence="5">Mastoparan-VB2</fullName>
        <shortName evidence="5">MP-VB2</shortName>
    </recommendedName>
</protein>